<proteinExistence type="inferred from homology"/>
<organism>
    <name type="scientific">Tolumonas auensis (strain DSM 9187 / NBRC 110442 / TA 4)</name>
    <dbReference type="NCBI Taxonomy" id="595494"/>
    <lineage>
        <taxon>Bacteria</taxon>
        <taxon>Pseudomonadati</taxon>
        <taxon>Pseudomonadota</taxon>
        <taxon>Gammaproteobacteria</taxon>
        <taxon>Aeromonadales</taxon>
        <taxon>Aeromonadaceae</taxon>
        <taxon>Tolumonas</taxon>
    </lineage>
</organism>
<dbReference type="EMBL" id="CP001616">
    <property type="protein sequence ID" value="ACQ91813.1"/>
    <property type="molecule type" value="Genomic_DNA"/>
</dbReference>
<dbReference type="RefSeq" id="WP_012728412.1">
    <property type="nucleotide sequence ID" value="NC_012691.1"/>
</dbReference>
<dbReference type="SMR" id="C4L814"/>
<dbReference type="STRING" id="595494.Tola_0183"/>
<dbReference type="KEGG" id="tau:Tola_0183"/>
<dbReference type="eggNOG" id="COG2003">
    <property type="taxonomic scope" value="Bacteria"/>
</dbReference>
<dbReference type="HOGENOM" id="CLU_073529_0_1_6"/>
<dbReference type="OrthoDB" id="9804482at2"/>
<dbReference type="Proteomes" id="UP000009073">
    <property type="component" value="Chromosome"/>
</dbReference>
<dbReference type="GO" id="GO:0046872">
    <property type="term" value="F:metal ion binding"/>
    <property type="evidence" value="ECO:0007669"/>
    <property type="project" value="UniProtKB-KW"/>
</dbReference>
<dbReference type="GO" id="GO:0008237">
    <property type="term" value="F:metallopeptidase activity"/>
    <property type="evidence" value="ECO:0007669"/>
    <property type="project" value="UniProtKB-KW"/>
</dbReference>
<dbReference type="GO" id="GO:0006508">
    <property type="term" value="P:proteolysis"/>
    <property type="evidence" value="ECO:0007669"/>
    <property type="project" value="UniProtKB-KW"/>
</dbReference>
<dbReference type="CDD" id="cd08071">
    <property type="entry name" value="MPN_DUF2466"/>
    <property type="match status" value="1"/>
</dbReference>
<dbReference type="FunFam" id="3.40.140.10:FF:000032">
    <property type="entry name" value="DNA repair protein RadC"/>
    <property type="match status" value="1"/>
</dbReference>
<dbReference type="Gene3D" id="1.10.150.20">
    <property type="entry name" value="5' to 3' exonuclease, C-terminal subdomain"/>
    <property type="match status" value="1"/>
</dbReference>
<dbReference type="Gene3D" id="3.40.140.10">
    <property type="entry name" value="Cytidine Deaminase, domain 2"/>
    <property type="match status" value="1"/>
</dbReference>
<dbReference type="InterPro" id="IPR037518">
    <property type="entry name" value="MPN"/>
</dbReference>
<dbReference type="InterPro" id="IPR025657">
    <property type="entry name" value="RadC_JAB"/>
</dbReference>
<dbReference type="InterPro" id="IPR010994">
    <property type="entry name" value="RuvA_2-like"/>
</dbReference>
<dbReference type="InterPro" id="IPR001405">
    <property type="entry name" value="UPF0758"/>
</dbReference>
<dbReference type="InterPro" id="IPR020891">
    <property type="entry name" value="UPF0758_CS"/>
</dbReference>
<dbReference type="InterPro" id="IPR046778">
    <property type="entry name" value="UPF0758_N"/>
</dbReference>
<dbReference type="NCBIfam" id="NF000642">
    <property type="entry name" value="PRK00024.1"/>
    <property type="match status" value="1"/>
</dbReference>
<dbReference type="NCBIfam" id="TIGR00608">
    <property type="entry name" value="radc"/>
    <property type="match status" value="1"/>
</dbReference>
<dbReference type="PANTHER" id="PTHR30471">
    <property type="entry name" value="DNA REPAIR PROTEIN RADC"/>
    <property type="match status" value="1"/>
</dbReference>
<dbReference type="PANTHER" id="PTHR30471:SF3">
    <property type="entry name" value="UPF0758 PROTEIN YEES-RELATED"/>
    <property type="match status" value="1"/>
</dbReference>
<dbReference type="Pfam" id="PF04002">
    <property type="entry name" value="RadC"/>
    <property type="match status" value="1"/>
</dbReference>
<dbReference type="Pfam" id="PF20582">
    <property type="entry name" value="UPF0758_N"/>
    <property type="match status" value="1"/>
</dbReference>
<dbReference type="SUPFAM" id="SSF102712">
    <property type="entry name" value="JAB1/MPN domain"/>
    <property type="match status" value="1"/>
</dbReference>
<dbReference type="SUPFAM" id="SSF47781">
    <property type="entry name" value="RuvA domain 2-like"/>
    <property type="match status" value="1"/>
</dbReference>
<dbReference type="PROSITE" id="PS50249">
    <property type="entry name" value="MPN"/>
    <property type="match status" value="1"/>
</dbReference>
<dbReference type="PROSITE" id="PS01302">
    <property type="entry name" value="UPF0758"/>
    <property type="match status" value="1"/>
</dbReference>
<evidence type="ECO:0000255" key="1">
    <source>
        <dbReference type="PROSITE-ProRule" id="PRU01182"/>
    </source>
</evidence>
<evidence type="ECO:0000305" key="2"/>
<comment type="similarity">
    <text evidence="2">Belongs to the UPF0758 family.</text>
</comment>
<reference key="1">
    <citation type="submission" date="2009-05" db="EMBL/GenBank/DDBJ databases">
        <title>Complete sequence of Tolumonas auensis DSM 9187.</title>
        <authorList>
            <consortium name="US DOE Joint Genome Institute"/>
            <person name="Lucas S."/>
            <person name="Copeland A."/>
            <person name="Lapidus A."/>
            <person name="Glavina del Rio T."/>
            <person name="Tice H."/>
            <person name="Bruce D."/>
            <person name="Goodwin L."/>
            <person name="Pitluck S."/>
            <person name="Chertkov O."/>
            <person name="Brettin T."/>
            <person name="Detter J.C."/>
            <person name="Han C."/>
            <person name="Larimer F."/>
            <person name="Land M."/>
            <person name="Hauser L."/>
            <person name="Kyrpides N."/>
            <person name="Mikhailova N."/>
            <person name="Spring S."/>
            <person name="Beller H."/>
        </authorList>
    </citation>
    <scope>NUCLEOTIDE SEQUENCE [LARGE SCALE GENOMIC DNA]</scope>
    <source>
        <strain>DSM 9187 / NBRC 110442 / TA 4</strain>
    </source>
</reference>
<gene>
    <name type="ordered locus">Tola_0183</name>
</gene>
<name>Y183_TOLAT</name>
<accession>C4L814</accession>
<feature type="chain" id="PRO_1000201883" description="UPF0758 protein Tola_0183">
    <location>
        <begin position="1"/>
        <end position="224"/>
    </location>
</feature>
<feature type="domain" description="MPN" evidence="1">
    <location>
        <begin position="102"/>
        <end position="224"/>
    </location>
</feature>
<feature type="short sequence motif" description="JAMM motif" evidence="1">
    <location>
        <begin position="173"/>
        <end position="186"/>
    </location>
</feature>
<feature type="binding site" evidence="1">
    <location>
        <position position="173"/>
    </location>
    <ligand>
        <name>Zn(2+)</name>
        <dbReference type="ChEBI" id="CHEBI:29105"/>
        <note>catalytic</note>
    </ligand>
</feature>
<feature type="binding site" evidence="1">
    <location>
        <position position="175"/>
    </location>
    <ligand>
        <name>Zn(2+)</name>
        <dbReference type="ChEBI" id="CHEBI:29105"/>
        <note>catalytic</note>
    </ligand>
</feature>
<feature type="binding site" evidence="1">
    <location>
        <position position="186"/>
    </location>
    <ligand>
        <name>Zn(2+)</name>
        <dbReference type="ChEBI" id="CHEBI:29105"/>
        <note>catalytic</note>
    </ligand>
</feature>
<keyword id="KW-0378">Hydrolase</keyword>
<keyword id="KW-0479">Metal-binding</keyword>
<keyword id="KW-0482">Metalloprotease</keyword>
<keyword id="KW-0645">Protease</keyword>
<keyword id="KW-1185">Reference proteome</keyword>
<keyword id="KW-0862">Zinc</keyword>
<sequence length="224" mass="25124">MAICDWPEDERPREKLLQRGASALSDAELLAIFLRTGVAGCNAIELARNLLQEFGSLRALLGAEQAQFCQAHGLGPAKYVQLQAVLEMSNRYLSECLQRGDSLTSPQLVRRYLQAQLRDRPREVFAMLLLDNQHRVLRFCELFFGTIDAASVYPREIVQTVLKHNAAAVILCHNHPSGVAEPSHADRHITERICDALRLIDVRVLDHFVIGDGDPVSFAERGWL</sequence>
<protein>
    <recommendedName>
        <fullName>UPF0758 protein Tola_0183</fullName>
    </recommendedName>
</protein>